<name>AMPA_DESPS</name>
<reference key="1">
    <citation type="journal article" date="2004" name="Environ. Microbiol.">
        <title>The genome of Desulfotalea psychrophila, a sulfate-reducing bacterium from permanently cold Arctic sediments.</title>
        <authorList>
            <person name="Rabus R."/>
            <person name="Ruepp A."/>
            <person name="Frickey T."/>
            <person name="Rattei T."/>
            <person name="Fartmann B."/>
            <person name="Stark M."/>
            <person name="Bauer M."/>
            <person name="Zibat A."/>
            <person name="Lombardot T."/>
            <person name="Becker I."/>
            <person name="Amann J."/>
            <person name="Gellner K."/>
            <person name="Teeling H."/>
            <person name="Leuschner W.D."/>
            <person name="Gloeckner F.-O."/>
            <person name="Lupas A.N."/>
            <person name="Amann R."/>
            <person name="Klenk H.-P."/>
        </authorList>
    </citation>
    <scope>NUCLEOTIDE SEQUENCE [LARGE SCALE GENOMIC DNA]</scope>
    <source>
        <strain>DSM 12343 / LSv54</strain>
    </source>
</reference>
<organism>
    <name type="scientific">Desulfotalea psychrophila (strain LSv54 / DSM 12343)</name>
    <dbReference type="NCBI Taxonomy" id="177439"/>
    <lineage>
        <taxon>Bacteria</taxon>
        <taxon>Pseudomonadati</taxon>
        <taxon>Thermodesulfobacteriota</taxon>
        <taxon>Desulfobulbia</taxon>
        <taxon>Desulfobulbales</taxon>
        <taxon>Desulfocapsaceae</taxon>
        <taxon>Desulfotalea</taxon>
    </lineage>
</organism>
<dbReference type="EC" id="3.4.11.1" evidence="1"/>
<dbReference type="EC" id="3.4.11.10" evidence="1"/>
<dbReference type="EMBL" id="CR522870">
    <property type="protein sequence ID" value="CAG37333.1"/>
    <property type="molecule type" value="Genomic_DNA"/>
</dbReference>
<dbReference type="RefSeq" id="WP_011189845.1">
    <property type="nucleotide sequence ID" value="NC_006138.1"/>
</dbReference>
<dbReference type="SMR" id="Q6AJZ3"/>
<dbReference type="STRING" id="177439.DP2604"/>
<dbReference type="KEGG" id="dps:DP2604"/>
<dbReference type="eggNOG" id="COG0260">
    <property type="taxonomic scope" value="Bacteria"/>
</dbReference>
<dbReference type="HOGENOM" id="CLU_013734_2_2_7"/>
<dbReference type="OrthoDB" id="9809354at2"/>
<dbReference type="Proteomes" id="UP000000602">
    <property type="component" value="Chromosome"/>
</dbReference>
<dbReference type="GO" id="GO:0005737">
    <property type="term" value="C:cytoplasm"/>
    <property type="evidence" value="ECO:0007669"/>
    <property type="project" value="UniProtKB-SubCell"/>
</dbReference>
<dbReference type="GO" id="GO:0030145">
    <property type="term" value="F:manganese ion binding"/>
    <property type="evidence" value="ECO:0007669"/>
    <property type="project" value="UniProtKB-UniRule"/>
</dbReference>
<dbReference type="GO" id="GO:0070006">
    <property type="term" value="F:metalloaminopeptidase activity"/>
    <property type="evidence" value="ECO:0007669"/>
    <property type="project" value="InterPro"/>
</dbReference>
<dbReference type="GO" id="GO:0006508">
    <property type="term" value="P:proteolysis"/>
    <property type="evidence" value="ECO:0007669"/>
    <property type="project" value="UniProtKB-KW"/>
</dbReference>
<dbReference type="CDD" id="cd00433">
    <property type="entry name" value="Peptidase_M17"/>
    <property type="match status" value="1"/>
</dbReference>
<dbReference type="Gene3D" id="3.40.220.10">
    <property type="entry name" value="Leucine Aminopeptidase, subunit E, domain 1"/>
    <property type="match status" value="1"/>
</dbReference>
<dbReference type="Gene3D" id="3.40.630.10">
    <property type="entry name" value="Zn peptidases"/>
    <property type="match status" value="1"/>
</dbReference>
<dbReference type="HAMAP" id="MF_00181">
    <property type="entry name" value="Cytosol_peptidase_M17"/>
    <property type="match status" value="1"/>
</dbReference>
<dbReference type="InterPro" id="IPR011356">
    <property type="entry name" value="Leucine_aapep/pepB"/>
</dbReference>
<dbReference type="InterPro" id="IPR043472">
    <property type="entry name" value="Macro_dom-like"/>
</dbReference>
<dbReference type="InterPro" id="IPR000819">
    <property type="entry name" value="Peptidase_M17_C"/>
</dbReference>
<dbReference type="InterPro" id="IPR023042">
    <property type="entry name" value="Peptidase_M17_leu_NH2_pept"/>
</dbReference>
<dbReference type="InterPro" id="IPR008283">
    <property type="entry name" value="Peptidase_M17_N"/>
</dbReference>
<dbReference type="NCBIfam" id="NF002073">
    <property type="entry name" value="PRK00913.1-2"/>
    <property type="match status" value="1"/>
</dbReference>
<dbReference type="NCBIfam" id="NF002074">
    <property type="entry name" value="PRK00913.1-4"/>
    <property type="match status" value="1"/>
</dbReference>
<dbReference type="NCBIfam" id="NF002083">
    <property type="entry name" value="PRK00913.3-5"/>
    <property type="match status" value="1"/>
</dbReference>
<dbReference type="PANTHER" id="PTHR11963:SF23">
    <property type="entry name" value="CYTOSOL AMINOPEPTIDASE"/>
    <property type="match status" value="1"/>
</dbReference>
<dbReference type="PANTHER" id="PTHR11963">
    <property type="entry name" value="LEUCINE AMINOPEPTIDASE-RELATED"/>
    <property type="match status" value="1"/>
</dbReference>
<dbReference type="Pfam" id="PF00883">
    <property type="entry name" value="Peptidase_M17"/>
    <property type="match status" value="1"/>
</dbReference>
<dbReference type="Pfam" id="PF02789">
    <property type="entry name" value="Peptidase_M17_N"/>
    <property type="match status" value="1"/>
</dbReference>
<dbReference type="PRINTS" id="PR00481">
    <property type="entry name" value="LAMNOPPTDASE"/>
</dbReference>
<dbReference type="SUPFAM" id="SSF52949">
    <property type="entry name" value="Macro domain-like"/>
    <property type="match status" value="1"/>
</dbReference>
<dbReference type="SUPFAM" id="SSF53187">
    <property type="entry name" value="Zn-dependent exopeptidases"/>
    <property type="match status" value="1"/>
</dbReference>
<dbReference type="PROSITE" id="PS00631">
    <property type="entry name" value="CYTOSOL_AP"/>
    <property type="match status" value="1"/>
</dbReference>
<keyword id="KW-0031">Aminopeptidase</keyword>
<keyword id="KW-0963">Cytoplasm</keyword>
<keyword id="KW-0378">Hydrolase</keyword>
<keyword id="KW-0464">Manganese</keyword>
<keyword id="KW-0479">Metal-binding</keyword>
<keyword id="KW-0645">Protease</keyword>
<keyword id="KW-1185">Reference proteome</keyword>
<evidence type="ECO:0000255" key="1">
    <source>
        <dbReference type="HAMAP-Rule" id="MF_00181"/>
    </source>
</evidence>
<gene>
    <name evidence="1" type="primary">pepA</name>
    <name type="ordered locus">DP2604</name>
</gene>
<comment type="function">
    <text evidence="1">Presumably involved in the processing and regular turnover of intracellular proteins. Catalyzes the removal of unsubstituted N-terminal amino acids from various peptides.</text>
</comment>
<comment type="catalytic activity">
    <reaction evidence="1">
        <text>Release of an N-terminal amino acid, Xaa-|-Yaa-, in which Xaa is preferably Leu, but may be other amino acids including Pro although not Arg or Lys, and Yaa may be Pro. Amino acid amides and methyl esters are also readily hydrolyzed, but rates on arylamides are exceedingly low.</text>
        <dbReference type="EC" id="3.4.11.1"/>
    </reaction>
</comment>
<comment type="catalytic activity">
    <reaction evidence="1">
        <text>Release of an N-terminal amino acid, preferentially leucine, but not glutamic or aspartic acids.</text>
        <dbReference type="EC" id="3.4.11.10"/>
    </reaction>
</comment>
<comment type="cofactor">
    <cofactor evidence="1">
        <name>Mn(2+)</name>
        <dbReference type="ChEBI" id="CHEBI:29035"/>
    </cofactor>
    <text evidence="1">Binds 2 manganese ions per subunit.</text>
</comment>
<comment type="subcellular location">
    <subcellularLocation>
        <location evidence="1">Cytoplasm</location>
    </subcellularLocation>
</comment>
<comment type="similarity">
    <text evidence="1">Belongs to the peptidase M17 family.</text>
</comment>
<proteinExistence type="inferred from homology"/>
<feature type="chain" id="PRO_0000165748" description="Probable cytosol aminopeptidase">
    <location>
        <begin position="1"/>
        <end position="502"/>
    </location>
</feature>
<feature type="active site" evidence="1">
    <location>
        <position position="282"/>
    </location>
</feature>
<feature type="active site" evidence="1">
    <location>
        <position position="356"/>
    </location>
</feature>
<feature type="binding site" evidence="1">
    <location>
        <position position="270"/>
    </location>
    <ligand>
        <name>Mn(2+)</name>
        <dbReference type="ChEBI" id="CHEBI:29035"/>
        <label>2</label>
    </ligand>
</feature>
<feature type="binding site" evidence="1">
    <location>
        <position position="275"/>
    </location>
    <ligand>
        <name>Mn(2+)</name>
        <dbReference type="ChEBI" id="CHEBI:29035"/>
        <label>1</label>
    </ligand>
</feature>
<feature type="binding site" evidence="1">
    <location>
        <position position="275"/>
    </location>
    <ligand>
        <name>Mn(2+)</name>
        <dbReference type="ChEBI" id="CHEBI:29035"/>
        <label>2</label>
    </ligand>
</feature>
<feature type="binding site" evidence="1">
    <location>
        <position position="293"/>
    </location>
    <ligand>
        <name>Mn(2+)</name>
        <dbReference type="ChEBI" id="CHEBI:29035"/>
        <label>2</label>
    </ligand>
</feature>
<feature type="binding site" evidence="1">
    <location>
        <position position="352"/>
    </location>
    <ligand>
        <name>Mn(2+)</name>
        <dbReference type="ChEBI" id="CHEBI:29035"/>
        <label>1</label>
    </ligand>
</feature>
<feature type="binding site" evidence="1">
    <location>
        <position position="354"/>
    </location>
    <ligand>
        <name>Mn(2+)</name>
        <dbReference type="ChEBI" id="CHEBI:29035"/>
        <label>1</label>
    </ligand>
</feature>
<feature type="binding site" evidence="1">
    <location>
        <position position="354"/>
    </location>
    <ligand>
        <name>Mn(2+)</name>
        <dbReference type="ChEBI" id="CHEBI:29035"/>
        <label>2</label>
    </ligand>
</feature>
<protein>
    <recommendedName>
        <fullName evidence="1">Probable cytosol aminopeptidase</fullName>
        <ecNumber evidence="1">3.4.11.1</ecNumber>
    </recommendedName>
    <alternativeName>
        <fullName evidence="1">Leucine aminopeptidase</fullName>
        <shortName evidence="1">LAP</shortName>
        <ecNumber evidence="1">3.4.11.10</ecNumber>
    </alternativeName>
    <alternativeName>
        <fullName evidence="1">Leucyl aminopeptidase</fullName>
    </alternativeName>
</protein>
<sequence length="502" mass="53761">MSKTQVVHYEKWQSFAGDLLVFPLGEKPEFSGDMKEIANIYNKLEATGDFSGKDGEAVLLYSSQLKKSICGAERILLLGLGKGDKDSDLQRDLLRQTGGLVAQKAAEIKATEVLVVIPTLAGRKSADTLEPLVEGVLLGDYRFLKYMSKKDAPAPYRGLKVLALSFAGAFDKALERISERAQLAADCGCAARDMAHEPGNGWTPKHFSRYAKKLAKSHSLVCTVLGKKKMKKMGMGGLLGVSQGSKESPQLVVLEYSPENPRKTVLMVGKGLTFDSGGVSLKPGAGMEEMKYDMCGGAAVICAMKAVAEEKPDVRVIAIVPATDNMAGGGALKPGDIISHYGGISSEVVNTDAEGRLILADALAYGVEKYCPDYVLDLATLTGAAIIALGHHHTALVSNSDHLVELATRAGAKAGEPVWRLPLTEEYRKQIKSEVADIKNVGGRPAGTITAAAYLEKFIGDTPWLHFDIAGTAWNFTEKKYIPKGPSGTGTRTLIEFIRSLG</sequence>
<accession>Q6AJZ3</accession>